<name>MTLD_BUCA5</name>
<evidence type="ECO:0000255" key="1">
    <source>
        <dbReference type="HAMAP-Rule" id="MF_00196"/>
    </source>
</evidence>
<protein>
    <recommendedName>
        <fullName evidence="1">Mannitol-1-phosphate 5-dehydrogenase</fullName>
        <ecNumber evidence="1">1.1.1.17</ecNumber>
    </recommendedName>
</protein>
<dbReference type="EC" id="1.1.1.17" evidence="1"/>
<dbReference type="EMBL" id="CP001161">
    <property type="protein sequence ID" value="ACL30911.1"/>
    <property type="molecule type" value="Genomic_DNA"/>
</dbReference>
<dbReference type="RefSeq" id="WP_009874519.1">
    <property type="nucleotide sequence ID" value="NC_011833.1"/>
</dbReference>
<dbReference type="SMR" id="B8D8D5"/>
<dbReference type="KEGG" id="bap:BUAP5A_564"/>
<dbReference type="HOGENOM" id="CLU_036089_2_0_6"/>
<dbReference type="OrthoDB" id="271711at2"/>
<dbReference type="Proteomes" id="UP000006904">
    <property type="component" value="Chromosome"/>
</dbReference>
<dbReference type="GO" id="GO:0005829">
    <property type="term" value="C:cytosol"/>
    <property type="evidence" value="ECO:0007669"/>
    <property type="project" value="TreeGrafter"/>
</dbReference>
<dbReference type="GO" id="GO:0008926">
    <property type="term" value="F:mannitol-1-phosphate 5-dehydrogenase activity"/>
    <property type="evidence" value="ECO:0007669"/>
    <property type="project" value="UniProtKB-UniRule"/>
</dbReference>
<dbReference type="GO" id="GO:0019592">
    <property type="term" value="P:mannitol catabolic process"/>
    <property type="evidence" value="ECO:0007669"/>
    <property type="project" value="TreeGrafter"/>
</dbReference>
<dbReference type="Gene3D" id="1.10.1040.10">
    <property type="entry name" value="N-(1-d-carboxylethyl)-l-norvaline Dehydrogenase, domain 2"/>
    <property type="match status" value="1"/>
</dbReference>
<dbReference type="Gene3D" id="3.40.50.720">
    <property type="entry name" value="NAD(P)-binding Rossmann-like Domain"/>
    <property type="match status" value="1"/>
</dbReference>
<dbReference type="HAMAP" id="MF_00196">
    <property type="entry name" value="Mannitol_dehydrog"/>
    <property type="match status" value="1"/>
</dbReference>
<dbReference type="InterPro" id="IPR008927">
    <property type="entry name" value="6-PGluconate_DH-like_C_sf"/>
</dbReference>
<dbReference type="InterPro" id="IPR013328">
    <property type="entry name" value="6PGD_dom2"/>
</dbReference>
<dbReference type="InterPro" id="IPR023028">
    <property type="entry name" value="Mannitol_1_phos_5_DH"/>
</dbReference>
<dbReference type="InterPro" id="IPR000669">
    <property type="entry name" value="Mannitol_DH"/>
</dbReference>
<dbReference type="InterPro" id="IPR013118">
    <property type="entry name" value="Mannitol_DH_C"/>
</dbReference>
<dbReference type="InterPro" id="IPR013131">
    <property type="entry name" value="Mannitol_DH_N"/>
</dbReference>
<dbReference type="InterPro" id="IPR036291">
    <property type="entry name" value="NAD(P)-bd_dom_sf"/>
</dbReference>
<dbReference type="NCBIfam" id="NF002646">
    <property type="entry name" value="PRK02318.1-2"/>
    <property type="match status" value="1"/>
</dbReference>
<dbReference type="NCBIfam" id="NF002650">
    <property type="entry name" value="PRK02318.2-2"/>
    <property type="match status" value="1"/>
</dbReference>
<dbReference type="NCBIfam" id="NF002652">
    <property type="entry name" value="PRK02318.2-5"/>
    <property type="match status" value="1"/>
</dbReference>
<dbReference type="PANTHER" id="PTHR30524:SF0">
    <property type="entry name" value="ALTRONATE OXIDOREDUCTASE-RELATED"/>
    <property type="match status" value="1"/>
</dbReference>
<dbReference type="PANTHER" id="PTHR30524">
    <property type="entry name" value="MANNITOL-1-PHOSPHATE 5-DEHYDROGENASE"/>
    <property type="match status" value="1"/>
</dbReference>
<dbReference type="Pfam" id="PF01232">
    <property type="entry name" value="Mannitol_dh"/>
    <property type="match status" value="1"/>
</dbReference>
<dbReference type="Pfam" id="PF08125">
    <property type="entry name" value="Mannitol_dh_C"/>
    <property type="match status" value="1"/>
</dbReference>
<dbReference type="PRINTS" id="PR00084">
    <property type="entry name" value="MTLDHDRGNASE"/>
</dbReference>
<dbReference type="SUPFAM" id="SSF48179">
    <property type="entry name" value="6-phosphogluconate dehydrogenase C-terminal domain-like"/>
    <property type="match status" value="1"/>
</dbReference>
<dbReference type="SUPFAM" id="SSF51735">
    <property type="entry name" value="NAD(P)-binding Rossmann-fold domains"/>
    <property type="match status" value="1"/>
</dbReference>
<gene>
    <name evidence="1" type="primary">mtlD</name>
    <name type="ordered locus">BUAP5A_564</name>
</gene>
<reference key="1">
    <citation type="journal article" date="2009" name="Science">
        <title>The dynamics and time scale of ongoing genomic erosion in symbiotic bacteria.</title>
        <authorList>
            <person name="Moran N.A."/>
            <person name="McLaughlin H.J."/>
            <person name="Sorek R."/>
        </authorList>
    </citation>
    <scope>NUCLEOTIDE SEQUENCE [LARGE SCALE GENOMIC DNA]</scope>
    <source>
        <strain>5A</strain>
    </source>
</reference>
<sequence>MKALQFGAGNIGRGFIGKTLSESGFSVIFSDVNQNIVDAINYNREYFVKIIGSNQNKTVNIKRVSAINSNDSNIKKIISSVDLITTAVGPTALEKIALIITQGIIFKIKNQFTKPLNIIACENKIKSSSFLKQVVLKNLPIKYHDYLNKYIGFIDCSIDTIIPSINNKDDLFLTVEEFKEWIVNINQFKGAVLKIVDMKFSNNLDAFIERKLFTLNTGHAIAAYLGLIKNYKTIQDAISDKKIRVIVRSAMEESGSVLIKRYNFNKNDHLDYIEKIFLRFENPFLSDKLERIGRNPLQKLRREDRLIKPFLGAFEYNLPYSNLAKGIAAAFYYHNKNDLESIELSSSIKKQGLESTIIKICDLPVNSKEVYSIILEYNLIKKIIR</sequence>
<feature type="chain" id="PRO_1000124385" description="Mannitol-1-phosphate 5-dehydrogenase">
    <location>
        <begin position="1"/>
        <end position="385"/>
    </location>
</feature>
<feature type="binding site" evidence="1">
    <location>
        <begin position="3"/>
        <end position="14"/>
    </location>
    <ligand>
        <name>NAD(+)</name>
        <dbReference type="ChEBI" id="CHEBI:57540"/>
    </ligand>
</feature>
<keyword id="KW-0520">NAD</keyword>
<keyword id="KW-0560">Oxidoreductase</keyword>
<comment type="catalytic activity">
    <reaction evidence="1">
        <text>D-mannitol 1-phosphate + NAD(+) = beta-D-fructose 6-phosphate + NADH + H(+)</text>
        <dbReference type="Rhea" id="RHEA:19661"/>
        <dbReference type="ChEBI" id="CHEBI:15378"/>
        <dbReference type="ChEBI" id="CHEBI:57540"/>
        <dbReference type="ChEBI" id="CHEBI:57634"/>
        <dbReference type="ChEBI" id="CHEBI:57945"/>
        <dbReference type="ChEBI" id="CHEBI:61381"/>
        <dbReference type="EC" id="1.1.1.17"/>
    </reaction>
</comment>
<comment type="similarity">
    <text evidence="1">Belongs to the mannitol dehydrogenase family.</text>
</comment>
<accession>B8D8D5</accession>
<proteinExistence type="inferred from homology"/>
<organism>
    <name type="scientific">Buchnera aphidicola subsp. Acyrthosiphon pisum (strain 5A)</name>
    <dbReference type="NCBI Taxonomy" id="563178"/>
    <lineage>
        <taxon>Bacteria</taxon>
        <taxon>Pseudomonadati</taxon>
        <taxon>Pseudomonadota</taxon>
        <taxon>Gammaproteobacteria</taxon>
        <taxon>Enterobacterales</taxon>
        <taxon>Erwiniaceae</taxon>
        <taxon>Buchnera</taxon>
    </lineage>
</organism>